<proteinExistence type="inferred from homology"/>
<organism>
    <name type="scientific">Salmonella choleraesuis (strain SC-B67)</name>
    <dbReference type="NCBI Taxonomy" id="321314"/>
    <lineage>
        <taxon>Bacteria</taxon>
        <taxon>Pseudomonadati</taxon>
        <taxon>Pseudomonadota</taxon>
        <taxon>Gammaproteobacteria</taxon>
        <taxon>Enterobacterales</taxon>
        <taxon>Enterobacteriaceae</taxon>
        <taxon>Salmonella</taxon>
    </lineage>
</organism>
<gene>
    <name evidence="1" type="primary">mtfA</name>
    <name type="ordered locus">SCH_2003</name>
</gene>
<protein>
    <recommendedName>
        <fullName evidence="1">Mlc titration factor A</fullName>
    </recommendedName>
    <alternativeName>
        <fullName evidence="1">Probable zinc metallopeptidase MtfA</fullName>
        <ecNumber evidence="1">3.4.11.-</ecNumber>
    </alternativeName>
</protein>
<evidence type="ECO:0000255" key="1">
    <source>
        <dbReference type="HAMAP-Rule" id="MF_01593"/>
    </source>
</evidence>
<evidence type="ECO:0000305" key="2"/>
<accession>Q57N02</accession>
<comment type="function">
    <text evidence="1">Involved in the modulation of the activity of the glucose-phosphotransferase system (glucose-PTS). Interacts with the transcriptional repressor Mlc, preventing its interaction with DNA and leading to the modulation of expression of genes regulated by Mlc, including ptsG, which encodes the PTS system glucose-specific EIICB component.</text>
</comment>
<comment type="function">
    <text evidence="1">Shows zinc-dependent metallopeptidase activity.</text>
</comment>
<comment type="cofactor">
    <cofactor evidence="1">
        <name>Zn(2+)</name>
        <dbReference type="ChEBI" id="CHEBI:29105"/>
    </cofactor>
    <text evidence="1">Binds 1 zinc ion per subunit.</text>
</comment>
<comment type="subunit">
    <text evidence="1">Interacts with Mlc.</text>
</comment>
<comment type="subcellular location">
    <subcellularLocation>
        <location evidence="1">Cytoplasm</location>
    </subcellularLocation>
</comment>
<comment type="similarity">
    <text evidence="1">Belongs to the MtfA family.</text>
</comment>
<comment type="sequence caution" evidence="2">
    <conflict type="erroneous termination">
        <sequence resource="EMBL-CDS" id="AAX65909"/>
    </conflict>
    <text>Truncated C-terminus.</text>
</comment>
<reference key="1">
    <citation type="journal article" date="2005" name="Nucleic Acids Res.">
        <title>The genome sequence of Salmonella enterica serovar Choleraesuis, a highly invasive and resistant zoonotic pathogen.</title>
        <authorList>
            <person name="Chiu C.-H."/>
            <person name="Tang P."/>
            <person name="Chu C."/>
            <person name="Hu S."/>
            <person name="Bao Q."/>
            <person name="Yu J."/>
            <person name="Chou Y.-Y."/>
            <person name="Wang H.-S."/>
            <person name="Lee Y.-S."/>
        </authorList>
    </citation>
    <scope>NUCLEOTIDE SEQUENCE [LARGE SCALE GENOMIC DNA]</scope>
    <source>
        <strain>SC-B67</strain>
    </source>
</reference>
<feature type="chain" id="PRO_0000316319" description="Mlc titration factor A">
    <location>
        <begin position="1"/>
        <end position="265"/>
    </location>
</feature>
<feature type="binding site" evidence="1">
    <location>
        <position position="111"/>
    </location>
    <ligand>
        <name>Zn(2+)</name>
        <dbReference type="ChEBI" id="CHEBI:29105"/>
    </ligand>
</feature>
<feature type="binding site" evidence="1">
    <location>
        <position position="148"/>
    </location>
    <ligand>
        <name>Zn(2+)</name>
        <dbReference type="ChEBI" id="CHEBI:29105"/>
    </ligand>
</feature>
<feature type="binding site" evidence="1">
    <location>
        <position position="152"/>
    </location>
    <ligand>
        <name>Zn(2+)</name>
        <dbReference type="ChEBI" id="CHEBI:29105"/>
    </ligand>
</feature>
<feature type="binding site" evidence="1">
    <location>
        <position position="211"/>
    </location>
    <ligand>
        <name>Zn(2+)</name>
        <dbReference type="ChEBI" id="CHEBI:29105"/>
    </ligand>
</feature>
<sequence length="265" mass="30191">MIKWPWKAQEITQNEDWPWDNALAIPLLVNLTAQEQARLIALAERFLQQKRLVALQGFELDSLKSARIALIFCLPILELGIEWLDGFHEVLIYPAPFVVDDEWEDDIGLVHSQRVVQSGQSWQQGPIILNWLDIQDSFDASGFNLIIHEVAHKLDMRNGDRASGIPFIPLRDVAGWEHDLHAAMNNIQDEIDLVGESAASIDAYAATDPAECFAVLSEYFFSAPELFAPRFPALWQRFCQFYRQDPSQRLRVSAAEGDYGEESEH</sequence>
<keyword id="KW-0031">Aminopeptidase</keyword>
<keyword id="KW-0963">Cytoplasm</keyword>
<keyword id="KW-0378">Hydrolase</keyword>
<keyword id="KW-0479">Metal-binding</keyword>
<keyword id="KW-0482">Metalloprotease</keyword>
<keyword id="KW-0645">Protease</keyword>
<keyword id="KW-0862">Zinc</keyword>
<dbReference type="EC" id="3.4.11.-" evidence="1"/>
<dbReference type="EMBL" id="AE017220">
    <property type="protein sequence ID" value="AAX65909.1"/>
    <property type="status" value="ALT_SEQ"/>
    <property type="molecule type" value="Genomic_DNA"/>
</dbReference>
<dbReference type="SMR" id="Q57N02"/>
<dbReference type="MEROPS" id="M90.001"/>
<dbReference type="KEGG" id="sec:SCH_2003"/>
<dbReference type="HOGENOM" id="CLU_063037_2_0_6"/>
<dbReference type="Proteomes" id="UP000000538">
    <property type="component" value="Chromosome"/>
</dbReference>
<dbReference type="GO" id="GO:0005829">
    <property type="term" value="C:cytosol"/>
    <property type="evidence" value="ECO:0007669"/>
    <property type="project" value="TreeGrafter"/>
</dbReference>
<dbReference type="GO" id="GO:0004177">
    <property type="term" value="F:aminopeptidase activity"/>
    <property type="evidence" value="ECO:0007669"/>
    <property type="project" value="UniProtKB-UniRule"/>
</dbReference>
<dbReference type="GO" id="GO:0008237">
    <property type="term" value="F:metallopeptidase activity"/>
    <property type="evidence" value="ECO:0007669"/>
    <property type="project" value="UniProtKB-UniRule"/>
</dbReference>
<dbReference type="GO" id="GO:0008270">
    <property type="term" value="F:zinc ion binding"/>
    <property type="evidence" value="ECO:0007669"/>
    <property type="project" value="UniProtKB-UniRule"/>
</dbReference>
<dbReference type="GO" id="GO:0006508">
    <property type="term" value="P:proteolysis"/>
    <property type="evidence" value="ECO:0007669"/>
    <property type="project" value="UniProtKB-KW"/>
</dbReference>
<dbReference type="CDD" id="cd20169">
    <property type="entry name" value="Peptidase_M90_mtfA"/>
    <property type="match status" value="1"/>
</dbReference>
<dbReference type="FunFam" id="1.10.472.150:FF:000001">
    <property type="entry name" value="Protein MtfA"/>
    <property type="match status" value="1"/>
</dbReference>
<dbReference type="FunFam" id="3.40.390.10:FF:000012">
    <property type="entry name" value="Protein MtfA"/>
    <property type="match status" value="1"/>
</dbReference>
<dbReference type="Gene3D" id="3.40.390.10">
    <property type="entry name" value="Collagenase (Catalytic Domain)"/>
    <property type="match status" value="1"/>
</dbReference>
<dbReference type="Gene3D" id="1.10.472.150">
    <property type="entry name" value="Glucose-regulated metallo-peptidase M90, N-terminal domain"/>
    <property type="match status" value="1"/>
</dbReference>
<dbReference type="HAMAP" id="MF_01593">
    <property type="entry name" value="MtfA"/>
    <property type="match status" value="1"/>
</dbReference>
<dbReference type="InterPro" id="IPR024079">
    <property type="entry name" value="MetalloPept_cat_dom_sf"/>
</dbReference>
<dbReference type="InterPro" id="IPR057256">
    <property type="entry name" value="MtfA_enterob"/>
</dbReference>
<dbReference type="InterPro" id="IPR010384">
    <property type="entry name" value="MtfA_fam"/>
</dbReference>
<dbReference type="InterPro" id="IPR042252">
    <property type="entry name" value="MtfA_N"/>
</dbReference>
<dbReference type="NCBIfam" id="NF011939">
    <property type="entry name" value="PRK15410.1"/>
    <property type="match status" value="1"/>
</dbReference>
<dbReference type="PANTHER" id="PTHR30164">
    <property type="entry name" value="MTFA PEPTIDASE"/>
    <property type="match status" value="1"/>
</dbReference>
<dbReference type="PANTHER" id="PTHR30164:SF2">
    <property type="entry name" value="PROTEIN MTFA"/>
    <property type="match status" value="1"/>
</dbReference>
<dbReference type="Pfam" id="PF06167">
    <property type="entry name" value="Peptidase_M90"/>
    <property type="match status" value="1"/>
</dbReference>
<dbReference type="SUPFAM" id="SSF55486">
    <property type="entry name" value="Metalloproteases ('zincins'), catalytic domain"/>
    <property type="match status" value="1"/>
</dbReference>
<name>MTFA_SALCH</name>